<protein>
    <recommendedName>
        <fullName>Putative pterin-4-alpha-carbinolamine dehydratase</fullName>
        <shortName>PHS</shortName>
        <ecNumber>4.2.1.96</ecNumber>
    </recommendedName>
    <alternativeName>
        <fullName>4-alpha-hydroxy-tetrahydropterin dehydratase</fullName>
    </alternativeName>
    <alternativeName>
        <fullName>Pterin carbinolamine dehydratase</fullName>
        <shortName>PCD</shortName>
    </alternativeName>
</protein>
<gene>
    <name type="ordered locus">mlr4350</name>
</gene>
<proteinExistence type="inferred from homology"/>
<comment type="catalytic activity">
    <reaction>
        <text>(4aS,6R)-4a-hydroxy-L-erythro-5,6,7,8-tetrahydrobiopterin = (6R)-L-erythro-6,7-dihydrobiopterin + H2O</text>
        <dbReference type="Rhea" id="RHEA:11920"/>
        <dbReference type="ChEBI" id="CHEBI:15377"/>
        <dbReference type="ChEBI" id="CHEBI:15642"/>
        <dbReference type="ChEBI" id="CHEBI:43120"/>
        <dbReference type="EC" id="4.2.1.96"/>
    </reaction>
</comment>
<comment type="similarity">
    <text evidence="1">Belongs to the pterin-4-alpha-carbinolamine dehydratase family.</text>
</comment>
<evidence type="ECO:0000305" key="1"/>
<dbReference type="EC" id="4.2.1.96"/>
<dbReference type="EMBL" id="BA000012">
    <property type="protein sequence ID" value="BAB51028.1"/>
    <property type="molecule type" value="Genomic_DNA"/>
</dbReference>
<dbReference type="SMR" id="Q98E92"/>
<dbReference type="KEGG" id="mlo:mlr4350"/>
<dbReference type="eggNOG" id="COG2154">
    <property type="taxonomic scope" value="Bacteria"/>
</dbReference>
<dbReference type="HOGENOM" id="CLU_081974_3_2_5"/>
<dbReference type="Proteomes" id="UP000000552">
    <property type="component" value="Chromosome"/>
</dbReference>
<dbReference type="GO" id="GO:0008124">
    <property type="term" value="F:4-alpha-hydroxytetrahydrobiopterin dehydratase activity"/>
    <property type="evidence" value="ECO:0007669"/>
    <property type="project" value="UniProtKB-UniRule"/>
</dbReference>
<dbReference type="GO" id="GO:0006729">
    <property type="term" value="P:tetrahydrobiopterin biosynthetic process"/>
    <property type="evidence" value="ECO:0007669"/>
    <property type="project" value="InterPro"/>
</dbReference>
<dbReference type="CDD" id="cd00914">
    <property type="entry name" value="PCD_DCoH_subfamily_b"/>
    <property type="match status" value="1"/>
</dbReference>
<dbReference type="Gene3D" id="3.30.1360.20">
    <property type="entry name" value="Transcriptional coactivator/pterin dehydratase"/>
    <property type="match status" value="1"/>
</dbReference>
<dbReference type="HAMAP" id="MF_00434">
    <property type="entry name" value="Pterin_4_alpha"/>
    <property type="match status" value="1"/>
</dbReference>
<dbReference type="InterPro" id="IPR036428">
    <property type="entry name" value="PCD_sf"/>
</dbReference>
<dbReference type="InterPro" id="IPR001533">
    <property type="entry name" value="Pterin_deHydtase"/>
</dbReference>
<dbReference type="NCBIfam" id="NF002017">
    <property type="entry name" value="PRK00823.1-2"/>
    <property type="match status" value="1"/>
</dbReference>
<dbReference type="NCBIfam" id="NF002018">
    <property type="entry name" value="PRK00823.1-3"/>
    <property type="match status" value="1"/>
</dbReference>
<dbReference type="PANTHER" id="PTHR12599">
    <property type="entry name" value="PTERIN-4-ALPHA-CARBINOLAMINE DEHYDRATASE"/>
    <property type="match status" value="1"/>
</dbReference>
<dbReference type="PANTHER" id="PTHR12599:SF0">
    <property type="entry name" value="PTERIN-4-ALPHA-CARBINOLAMINE DEHYDRATASE"/>
    <property type="match status" value="1"/>
</dbReference>
<dbReference type="Pfam" id="PF01329">
    <property type="entry name" value="Pterin_4a"/>
    <property type="match status" value="1"/>
</dbReference>
<dbReference type="SUPFAM" id="SSF55248">
    <property type="entry name" value="PCD-like"/>
    <property type="match status" value="1"/>
</dbReference>
<keyword id="KW-0456">Lyase</keyword>
<reference key="1">
    <citation type="journal article" date="2000" name="DNA Res.">
        <title>Complete genome structure of the nitrogen-fixing symbiotic bacterium Mesorhizobium loti.</title>
        <authorList>
            <person name="Kaneko T."/>
            <person name="Nakamura Y."/>
            <person name="Sato S."/>
            <person name="Asamizu E."/>
            <person name="Kato T."/>
            <person name="Sasamoto S."/>
            <person name="Watanabe A."/>
            <person name="Idesawa K."/>
            <person name="Ishikawa A."/>
            <person name="Kawashima K."/>
            <person name="Kimura T."/>
            <person name="Kishida Y."/>
            <person name="Kiyokawa C."/>
            <person name="Kohara M."/>
            <person name="Matsumoto M."/>
            <person name="Matsuno A."/>
            <person name="Mochizuki Y."/>
            <person name="Nakayama S."/>
            <person name="Nakazaki N."/>
            <person name="Shimpo S."/>
            <person name="Sugimoto M."/>
            <person name="Takeuchi C."/>
            <person name="Yamada M."/>
            <person name="Tabata S."/>
        </authorList>
    </citation>
    <scope>NUCLEOTIDE SEQUENCE [LARGE SCALE GENOMIC DNA]</scope>
    <source>
        <strain>LMG 29417 / CECT 9101 / MAFF 303099</strain>
    </source>
</reference>
<accession>Q98E92</accession>
<organism>
    <name type="scientific">Mesorhizobium japonicum (strain LMG 29417 / CECT 9101 / MAFF 303099)</name>
    <name type="common">Mesorhizobium loti (strain MAFF 303099)</name>
    <dbReference type="NCBI Taxonomy" id="266835"/>
    <lineage>
        <taxon>Bacteria</taxon>
        <taxon>Pseudomonadati</taxon>
        <taxon>Pseudomonadota</taxon>
        <taxon>Alphaproteobacteria</taxon>
        <taxon>Hyphomicrobiales</taxon>
        <taxon>Phyllobacteriaceae</taxon>
        <taxon>Mesorhizobium</taxon>
    </lineage>
</organism>
<feature type="chain" id="PRO_0000063092" description="Putative pterin-4-alpha-carbinolamine dehydratase">
    <location>
        <begin position="1"/>
        <end position="98"/>
    </location>
</feature>
<sequence>MTREKLSKDAITAALAELGDWSLATDGASIKRSFVFRNFSEAFAFMTRVALAAEKMDHHPDWSNVYKTVDVTLNTHDAGGVTALDIALAKKMNHYFGG</sequence>
<name>PHS_RHILO</name>